<accession>Q5XCT0</accession>
<organism>
    <name type="scientific">Streptococcus pyogenes serotype M6 (strain ATCC BAA-946 / MGAS10394)</name>
    <dbReference type="NCBI Taxonomy" id="286636"/>
    <lineage>
        <taxon>Bacteria</taxon>
        <taxon>Bacillati</taxon>
        <taxon>Bacillota</taxon>
        <taxon>Bacilli</taxon>
        <taxon>Lactobacillales</taxon>
        <taxon>Streptococcaceae</taxon>
        <taxon>Streptococcus</taxon>
    </lineage>
</organism>
<reference key="1">
    <citation type="journal article" date="2004" name="J. Infect. Dis.">
        <title>Progress toward characterization of the group A Streptococcus metagenome: complete genome sequence of a macrolide-resistant serotype M6 strain.</title>
        <authorList>
            <person name="Banks D.J."/>
            <person name="Porcella S.F."/>
            <person name="Barbian K.D."/>
            <person name="Beres S.B."/>
            <person name="Philips L.E."/>
            <person name="Voyich J.M."/>
            <person name="DeLeo F.R."/>
            <person name="Martin J.M."/>
            <person name="Somerville G.A."/>
            <person name="Musser J.M."/>
        </authorList>
    </citation>
    <scope>NUCLEOTIDE SEQUENCE [LARGE SCALE GENOMIC DNA]</scope>
    <source>
        <strain>ATCC BAA-946 / MGAS10394</strain>
    </source>
</reference>
<keyword id="KW-0067">ATP-binding</keyword>
<keyword id="KW-0963">Cytoplasm</keyword>
<keyword id="KW-0547">Nucleotide-binding</keyword>
<keyword id="KW-0694">RNA-binding</keyword>
<keyword id="KW-0784">Thiamine biosynthesis</keyword>
<keyword id="KW-0808">Transferase</keyword>
<keyword id="KW-0820">tRNA-binding</keyword>
<proteinExistence type="inferred from homology"/>
<dbReference type="EC" id="2.8.1.4" evidence="1"/>
<dbReference type="EMBL" id="CP000003">
    <property type="protein sequence ID" value="AAT86783.1"/>
    <property type="molecule type" value="Genomic_DNA"/>
</dbReference>
<dbReference type="RefSeq" id="WP_002985121.1">
    <property type="nucleotide sequence ID" value="NC_006086.1"/>
</dbReference>
<dbReference type="SMR" id="Q5XCT0"/>
<dbReference type="KEGG" id="spa:M6_Spy0648"/>
<dbReference type="HOGENOM" id="CLU_037952_4_0_9"/>
<dbReference type="UniPathway" id="UPA00060"/>
<dbReference type="Proteomes" id="UP000001167">
    <property type="component" value="Chromosome"/>
</dbReference>
<dbReference type="GO" id="GO:0005829">
    <property type="term" value="C:cytosol"/>
    <property type="evidence" value="ECO:0007669"/>
    <property type="project" value="TreeGrafter"/>
</dbReference>
<dbReference type="GO" id="GO:0005524">
    <property type="term" value="F:ATP binding"/>
    <property type="evidence" value="ECO:0007669"/>
    <property type="project" value="UniProtKB-UniRule"/>
</dbReference>
<dbReference type="GO" id="GO:0004810">
    <property type="term" value="F:CCA tRNA nucleotidyltransferase activity"/>
    <property type="evidence" value="ECO:0007669"/>
    <property type="project" value="InterPro"/>
</dbReference>
<dbReference type="GO" id="GO:0000049">
    <property type="term" value="F:tRNA binding"/>
    <property type="evidence" value="ECO:0007669"/>
    <property type="project" value="UniProtKB-UniRule"/>
</dbReference>
<dbReference type="GO" id="GO:0140741">
    <property type="term" value="F:tRNA-uracil-4 sulfurtransferase activity"/>
    <property type="evidence" value="ECO:0007669"/>
    <property type="project" value="UniProtKB-EC"/>
</dbReference>
<dbReference type="GO" id="GO:0009228">
    <property type="term" value="P:thiamine biosynthetic process"/>
    <property type="evidence" value="ECO:0007669"/>
    <property type="project" value="UniProtKB-KW"/>
</dbReference>
<dbReference type="GO" id="GO:0009229">
    <property type="term" value="P:thiamine diphosphate biosynthetic process"/>
    <property type="evidence" value="ECO:0007669"/>
    <property type="project" value="UniProtKB-UniRule"/>
</dbReference>
<dbReference type="GO" id="GO:0052837">
    <property type="term" value="P:thiazole biosynthetic process"/>
    <property type="evidence" value="ECO:0007669"/>
    <property type="project" value="TreeGrafter"/>
</dbReference>
<dbReference type="GO" id="GO:0002937">
    <property type="term" value="P:tRNA 4-thiouridine biosynthesis"/>
    <property type="evidence" value="ECO:0007669"/>
    <property type="project" value="TreeGrafter"/>
</dbReference>
<dbReference type="CDD" id="cd01712">
    <property type="entry name" value="PPase_ThiI"/>
    <property type="match status" value="1"/>
</dbReference>
<dbReference type="CDD" id="cd11716">
    <property type="entry name" value="THUMP_ThiI"/>
    <property type="match status" value="1"/>
</dbReference>
<dbReference type="FunFam" id="3.40.50.620:FF:000053">
    <property type="entry name" value="Probable tRNA sulfurtransferase"/>
    <property type="match status" value="1"/>
</dbReference>
<dbReference type="Gene3D" id="3.30.2130.30">
    <property type="match status" value="1"/>
</dbReference>
<dbReference type="Gene3D" id="3.40.50.620">
    <property type="entry name" value="HUPs"/>
    <property type="match status" value="1"/>
</dbReference>
<dbReference type="HAMAP" id="MF_00021">
    <property type="entry name" value="ThiI"/>
    <property type="match status" value="1"/>
</dbReference>
<dbReference type="InterPro" id="IPR014729">
    <property type="entry name" value="Rossmann-like_a/b/a_fold"/>
</dbReference>
<dbReference type="InterPro" id="IPR020536">
    <property type="entry name" value="ThiI_AANH"/>
</dbReference>
<dbReference type="InterPro" id="IPR054173">
    <property type="entry name" value="ThiI_fer"/>
</dbReference>
<dbReference type="InterPro" id="IPR049961">
    <property type="entry name" value="ThiI_N"/>
</dbReference>
<dbReference type="InterPro" id="IPR004114">
    <property type="entry name" value="THUMP_dom"/>
</dbReference>
<dbReference type="InterPro" id="IPR049962">
    <property type="entry name" value="THUMP_ThiI"/>
</dbReference>
<dbReference type="InterPro" id="IPR003720">
    <property type="entry name" value="tRNA_STrfase"/>
</dbReference>
<dbReference type="InterPro" id="IPR050102">
    <property type="entry name" value="tRNA_sulfurtransferase_ThiI"/>
</dbReference>
<dbReference type="NCBIfam" id="TIGR00342">
    <property type="entry name" value="tRNA uracil 4-sulfurtransferase ThiI"/>
    <property type="match status" value="1"/>
</dbReference>
<dbReference type="PANTHER" id="PTHR43209">
    <property type="entry name" value="TRNA SULFURTRANSFERASE"/>
    <property type="match status" value="1"/>
</dbReference>
<dbReference type="PANTHER" id="PTHR43209:SF1">
    <property type="entry name" value="TRNA SULFURTRANSFERASE"/>
    <property type="match status" value="1"/>
</dbReference>
<dbReference type="Pfam" id="PF02568">
    <property type="entry name" value="ThiI"/>
    <property type="match status" value="1"/>
</dbReference>
<dbReference type="Pfam" id="PF22025">
    <property type="entry name" value="ThiI_fer"/>
    <property type="match status" value="1"/>
</dbReference>
<dbReference type="Pfam" id="PF02926">
    <property type="entry name" value="THUMP"/>
    <property type="match status" value="1"/>
</dbReference>
<dbReference type="SMART" id="SM00981">
    <property type="entry name" value="THUMP"/>
    <property type="match status" value="1"/>
</dbReference>
<dbReference type="SUPFAM" id="SSF52402">
    <property type="entry name" value="Adenine nucleotide alpha hydrolases-like"/>
    <property type="match status" value="1"/>
</dbReference>
<dbReference type="SUPFAM" id="SSF143437">
    <property type="entry name" value="THUMP domain-like"/>
    <property type="match status" value="1"/>
</dbReference>
<dbReference type="PROSITE" id="PS51165">
    <property type="entry name" value="THUMP"/>
    <property type="match status" value="1"/>
</dbReference>
<comment type="function">
    <text evidence="1">Catalyzes the ATP-dependent transfer of a sulfur to tRNA to produce 4-thiouridine in position 8 of tRNAs, which functions as a near-UV photosensor. Also catalyzes the transfer of sulfur to the sulfur carrier protein ThiS, forming ThiS-thiocarboxylate. This is a step in the synthesis of thiazole, in the thiamine biosynthesis pathway. The sulfur is donated as persulfide by IscS.</text>
</comment>
<comment type="catalytic activity">
    <reaction evidence="1">
        <text>[ThiI sulfur-carrier protein]-S-sulfanyl-L-cysteine + a uridine in tRNA + 2 reduced [2Fe-2S]-[ferredoxin] + ATP + H(+) = [ThiI sulfur-carrier protein]-L-cysteine + a 4-thiouridine in tRNA + 2 oxidized [2Fe-2S]-[ferredoxin] + AMP + diphosphate</text>
        <dbReference type="Rhea" id="RHEA:24176"/>
        <dbReference type="Rhea" id="RHEA-COMP:10000"/>
        <dbReference type="Rhea" id="RHEA-COMP:10001"/>
        <dbReference type="Rhea" id="RHEA-COMP:13337"/>
        <dbReference type="Rhea" id="RHEA-COMP:13338"/>
        <dbReference type="Rhea" id="RHEA-COMP:13339"/>
        <dbReference type="Rhea" id="RHEA-COMP:13340"/>
        <dbReference type="ChEBI" id="CHEBI:15378"/>
        <dbReference type="ChEBI" id="CHEBI:29950"/>
        <dbReference type="ChEBI" id="CHEBI:30616"/>
        <dbReference type="ChEBI" id="CHEBI:33019"/>
        <dbReference type="ChEBI" id="CHEBI:33737"/>
        <dbReference type="ChEBI" id="CHEBI:33738"/>
        <dbReference type="ChEBI" id="CHEBI:61963"/>
        <dbReference type="ChEBI" id="CHEBI:65315"/>
        <dbReference type="ChEBI" id="CHEBI:136798"/>
        <dbReference type="ChEBI" id="CHEBI:456215"/>
        <dbReference type="EC" id="2.8.1.4"/>
    </reaction>
</comment>
<comment type="catalytic activity">
    <reaction evidence="1">
        <text>[ThiS sulfur-carrier protein]-C-terminal Gly-Gly-AMP + S-sulfanyl-L-cysteinyl-[cysteine desulfurase] + AH2 = [ThiS sulfur-carrier protein]-C-terminal-Gly-aminoethanethioate + L-cysteinyl-[cysteine desulfurase] + A + AMP + 2 H(+)</text>
        <dbReference type="Rhea" id="RHEA:43340"/>
        <dbReference type="Rhea" id="RHEA-COMP:12157"/>
        <dbReference type="Rhea" id="RHEA-COMP:12158"/>
        <dbReference type="Rhea" id="RHEA-COMP:12910"/>
        <dbReference type="Rhea" id="RHEA-COMP:19908"/>
        <dbReference type="ChEBI" id="CHEBI:13193"/>
        <dbReference type="ChEBI" id="CHEBI:15378"/>
        <dbReference type="ChEBI" id="CHEBI:17499"/>
        <dbReference type="ChEBI" id="CHEBI:29950"/>
        <dbReference type="ChEBI" id="CHEBI:61963"/>
        <dbReference type="ChEBI" id="CHEBI:90618"/>
        <dbReference type="ChEBI" id="CHEBI:232372"/>
        <dbReference type="ChEBI" id="CHEBI:456215"/>
    </reaction>
</comment>
<comment type="pathway">
    <text evidence="1">Cofactor biosynthesis; thiamine diphosphate biosynthesis.</text>
</comment>
<comment type="subcellular location">
    <subcellularLocation>
        <location evidence="1">Cytoplasm</location>
    </subcellularLocation>
</comment>
<comment type="similarity">
    <text evidence="1">Belongs to the ThiI family.</text>
</comment>
<name>THII_STRP6</name>
<protein>
    <recommendedName>
        <fullName evidence="1">Probable tRNA sulfurtransferase</fullName>
        <ecNumber evidence="1">2.8.1.4</ecNumber>
    </recommendedName>
    <alternativeName>
        <fullName evidence="1">Sulfur carrier protein ThiS sulfurtransferase</fullName>
    </alternativeName>
    <alternativeName>
        <fullName evidence="1">Thiamine biosynthesis protein ThiI</fullName>
    </alternativeName>
    <alternativeName>
        <fullName evidence="1">tRNA 4-thiouridine synthase</fullName>
    </alternativeName>
</protein>
<evidence type="ECO:0000255" key="1">
    <source>
        <dbReference type="HAMAP-Rule" id="MF_00021"/>
    </source>
</evidence>
<gene>
    <name evidence="1" type="primary">thiI</name>
    <name type="ordered locus">M6_Spy0648</name>
</gene>
<sequence length="404" mass="44846">MDYSEIMVRHGELSTKGKNRMRFINKLKNNIQDVLAPFPAITVRSDRDRTHVYLNGTDYQPVVEALKLVFGVQALSPVYKLEKSVPLLVTAVQDIMTSLYRDGLTFKIATKRSDHAFELDSRELNSLLGGAVFEVLPNIQAQMKHPDVTLKVEIRDEAAYISYEEIKGAGGLPVGTSGKGMLMLSGGIDSPVAGYLALKRGLDIEVVHFASPPYTSPGALAKAQDLTRRLTRFGGNIQFIEVPFTEIQEEIKNKAPEAYLMTLTRRFMMRITDAIREQRKGLVIVNGESLGQVASQTLESMQAINAVTSTPIIRPVVTMDKLEIIEMAQAIDTFDISIQPFEDCCTIFAPDRPKTNPKLGNAEKYEERFDIDGLVQRAVSGIVVTEITPEIVNDEVENLIDALL</sequence>
<feature type="chain" id="PRO_0000154878" description="Probable tRNA sulfurtransferase">
    <location>
        <begin position="1"/>
        <end position="404"/>
    </location>
</feature>
<feature type="domain" description="THUMP" evidence="1">
    <location>
        <begin position="60"/>
        <end position="165"/>
    </location>
</feature>
<feature type="binding site" evidence="1">
    <location>
        <begin position="183"/>
        <end position="184"/>
    </location>
    <ligand>
        <name>ATP</name>
        <dbReference type="ChEBI" id="CHEBI:30616"/>
    </ligand>
</feature>
<feature type="binding site" evidence="1">
    <location>
        <begin position="208"/>
        <end position="209"/>
    </location>
    <ligand>
        <name>ATP</name>
        <dbReference type="ChEBI" id="CHEBI:30616"/>
    </ligand>
</feature>
<feature type="binding site" evidence="1">
    <location>
        <position position="265"/>
    </location>
    <ligand>
        <name>ATP</name>
        <dbReference type="ChEBI" id="CHEBI:30616"/>
    </ligand>
</feature>
<feature type="binding site" evidence="1">
    <location>
        <position position="287"/>
    </location>
    <ligand>
        <name>ATP</name>
        <dbReference type="ChEBI" id="CHEBI:30616"/>
    </ligand>
</feature>
<feature type="binding site" evidence="1">
    <location>
        <position position="296"/>
    </location>
    <ligand>
        <name>ATP</name>
        <dbReference type="ChEBI" id="CHEBI:30616"/>
    </ligand>
</feature>